<proteinExistence type="predicted"/>
<protein>
    <recommendedName>
        <fullName>Structural protein VP10</fullName>
    </recommendedName>
</protein>
<name>VP10_BANNV</name>
<accession>Q9YWQ2</accession>
<gene>
    <name type="primary">Segment-10</name>
    <name type="synonym">S10</name>
</gene>
<sequence length="249" mass="28515">MDVLSKSSLKELLAHLERTPLEEAISYKIGTIPYQNVLISRNEYYNQPYPDVTSLIDGVAREGQRNVNGLIMSIISYVVSGSGHYIPNIGYTLLRRSILDILTKHDTGLNTNNINYDMIARNLTVSKMNCEQRKRMLICFKLLAYKDGNLNDYETYLNQNISLKQIAPNFIPGDMRTVMSNSDKLSIVGIPAYRLTQSTELSIRDDNAKSYKIGYVDWYNSSSFLREGNDFNLISLKDRDNKYVRLNGW</sequence>
<feature type="chain" id="PRO_0000404237" description="Structural protein VP10">
    <location>
        <begin position="1"/>
        <end position="249"/>
    </location>
</feature>
<dbReference type="EMBL" id="AF052015">
    <property type="protein sequence ID" value="AAC72042.1"/>
    <property type="molecule type" value="Genomic_RNA"/>
</dbReference>
<dbReference type="RefSeq" id="NP_694459.1">
    <property type="nucleotide sequence ID" value="NC_004201.1"/>
</dbReference>
<dbReference type="SMR" id="Q9YWQ2"/>
<dbReference type="KEGG" id="vg:995343"/>
<dbReference type="Proteomes" id="UP000000832">
    <property type="component" value="Genome"/>
</dbReference>
<dbReference type="GO" id="GO:0019028">
    <property type="term" value="C:viral capsid"/>
    <property type="evidence" value="ECO:0007669"/>
    <property type="project" value="UniProtKB-KW"/>
</dbReference>
<dbReference type="InterPro" id="IPR009930">
    <property type="entry name" value="Seadorna_Vp10"/>
</dbReference>
<dbReference type="Pfam" id="PF07322">
    <property type="entry name" value="Seadorna_Vp10"/>
    <property type="match status" value="1"/>
</dbReference>
<reference key="1">
    <citation type="journal article" date="1998" name="J. Gen. Virol.">
        <title>Comparative sequence analysis of American, European and Asian isolates of viruses in the genus Coltivirus.</title>
        <authorList>
            <person name="Attoui H."/>
            <person name="Charrel R.N."/>
            <person name="Billoir F."/>
            <person name="Cantaloube J.F."/>
            <person name="de Micco P."/>
            <person name="de Lamballerie X."/>
        </authorList>
    </citation>
    <scope>NUCLEOTIDE SEQUENCE [GENOMIC RNA]</scope>
    <source>
        <strain>JKT-6423</strain>
    </source>
</reference>
<reference key="2">
    <citation type="journal article" date="2005" name="Structure">
        <title>The structure and function of the outer coat protein VP9 of Banna virus.</title>
        <authorList>
            <person name="Mohd Jaafar F."/>
            <person name="Attoui H."/>
            <person name="Bahar M.W."/>
            <person name="Siebold C."/>
            <person name="Sutton G."/>
            <person name="Mertens P.P."/>
            <person name="De Micco P."/>
            <person name="Stuart D.I."/>
            <person name="Grimes J.M."/>
            <person name="De Lamballerie X."/>
        </authorList>
    </citation>
    <scope>FUNCTION</scope>
    <source>
        <strain>BAV-Ch</strain>
    </source>
</reference>
<reference key="3">
    <citation type="journal article" date="2005" name="J. Gen. Virol.">
        <title>Structural organization of an encephalitic human isolate of Banna virus (genus Seadornavirus, family Reoviridae).</title>
        <authorList>
            <person name="Mohd Jaafar F."/>
            <person name="Attoui H."/>
            <person name="Mertens P.P."/>
            <person name="de Micco P."/>
            <person name="de Lamballerie X."/>
        </authorList>
    </citation>
    <scope>SUBCELLULAR LOCATION</scope>
</reference>
<keyword id="KW-0167">Capsid protein</keyword>
<keyword id="KW-1185">Reference proteome</keyword>
<keyword id="KW-0946">Virion</keyword>
<comment type="function">
    <text evidence="1">Forms the virion spike 'foot' and helps anchor the VP9 spike 'head' protein in the virion.</text>
</comment>
<comment type="subcellular location">
    <subcellularLocation>
        <location evidence="2">Virion</location>
    </subcellularLocation>
</comment>
<evidence type="ECO:0000269" key="1">
    <source>
    </source>
</evidence>
<evidence type="ECO:0000269" key="2">
    <source>
    </source>
</evidence>
<organism>
    <name type="scientific">Banna virus</name>
    <name type="common">BAV</name>
    <dbReference type="NCBI Taxonomy" id="77763"/>
    <lineage>
        <taxon>Viruses</taxon>
        <taxon>Riboviria</taxon>
        <taxon>Orthornavirae</taxon>
        <taxon>Duplornaviricota</taxon>
        <taxon>Resentoviricetes</taxon>
        <taxon>Reovirales</taxon>
        <taxon>Sedoreoviridae</taxon>
        <taxon>Seadornavirus</taxon>
        <taxon>Seadornavirus bannaense</taxon>
    </lineage>
</organism>